<protein>
    <recommendedName>
        <fullName evidence="10">Succinate receptor 1</fullName>
    </recommendedName>
    <alternativeName>
        <fullName>G-protein coupled receptor 91</fullName>
    </alternativeName>
    <alternativeName>
        <fullName>P2Y purinoceptor 1-like</fullName>
    </alternativeName>
</protein>
<organism>
    <name type="scientific">Homo sapiens</name>
    <name type="common">Human</name>
    <dbReference type="NCBI Taxonomy" id="9606"/>
    <lineage>
        <taxon>Eukaryota</taxon>
        <taxon>Metazoa</taxon>
        <taxon>Chordata</taxon>
        <taxon>Craniata</taxon>
        <taxon>Vertebrata</taxon>
        <taxon>Euteleostomi</taxon>
        <taxon>Mammalia</taxon>
        <taxon>Eutheria</taxon>
        <taxon>Euarchontoglires</taxon>
        <taxon>Primates</taxon>
        <taxon>Haplorrhini</taxon>
        <taxon>Catarrhini</taxon>
        <taxon>Hominidae</taxon>
        <taxon>Homo</taxon>
    </lineage>
</organism>
<keyword id="KW-0002">3D-structure</keyword>
<keyword id="KW-1003">Cell membrane</keyword>
<keyword id="KW-1015">Disulfide bond</keyword>
<keyword id="KW-0297">G-protein coupled receptor</keyword>
<keyword id="KW-0325">Glycoprotein</keyword>
<keyword id="KW-0472">Membrane</keyword>
<keyword id="KW-1267">Proteomics identification</keyword>
<keyword id="KW-0675">Receptor</keyword>
<keyword id="KW-1185">Reference proteome</keyword>
<keyword id="KW-0807">Transducer</keyword>
<keyword id="KW-0812">Transmembrane</keyword>
<keyword id="KW-1133">Transmembrane helix</keyword>
<evidence type="ECO:0000250" key="1">
    <source>
        <dbReference type="UniProtKB" id="Q6IYF9"/>
    </source>
</evidence>
<evidence type="ECO:0000250" key="2">
    <source>
        <dbReference type="UniProtKB" id="Q99MT6"/>
    </source>
</evidence>
<evidence type="ECO:0000255" key="3"/>
<evidence type="ECO:0000255" key="4">
    <source>
        <dbReference type="PROSITE-ProRule" id="PRU00521"/>
    </source>
</evidence>
<evidence type="ECO:0000269" key="5">
    <source>
    </source>
</evidence>
<evidence type="ECO:0000269" key="6">
    <source>
    </source>
</evidence>
<evidence type="ECO:0000269" key="7">
    <source>
    </source>
</evidence>
<evidence type="ECO:0000269" key="8">
    <source>
    </source>
</evidence>
<evidence type="ECO:0000269" key="9">
    <source>
    </source>
</evidence>
<evidence type="ECO:0000305" key="10"/>
<evidence type="ECO:0000312" key="11">
    <source>
        <dbReference type="HGNC" id="HGNC:4542"/>
    </source>
</evidence>
<evidence type="ECO:0007829" key="12">
    <source>
        <dbReference type="PDB" id="8JPN"/>
    </source>
</evidence>
<evidence type="ECO:0007829" key="13">
    <source>
        <dbReference type="PDB" id="8WOG"/>
    </source>
</evidence>
<evidence type="ECO:0007829" key="14">
    <source>
        <dbReference type="PDB" id="8YKW"/>
    </source>
</evidence>
<evidence type="ECO:0007829" key="15">
    <source>
        <dbReference type="PDB" id="8YKX"/>
    </source>
</evidence>
<name>SUCR1_HUMAN</name>
<feature type="chain" id="PRO_0000070134" description="Succinate receptor 1">
    <location>
        <begin position="1"/>
        <end position="334"/>
    </location>
</feature>
<feature type="topological domain" description="Extracellular" evidence="3">
    <location>
        <begin position="5"/>
        <end position="31"/>
    </location>
</feature>
<feature type="transmembrane region" description="Helical; Name=1" evidence="3">
    <location>
        <begin position="32"/>
        <end position="52"/>
    </location>
</feature>
<feature type="topological domain" description="Cytoplasmic" evidence="3">
    <location>
        <begin position="53"/>
        <end position="59"/>
    </location>
</feature>
<feature type="transmembrane region" description="Helical; Name=2" evidence="3">
    <location>
        <begin position="60"/>
        <end position="80"/>
    </location>
</feature>
<feature type="topological domain" description="Extracellular" evidence="3">
    <location>
        <begin position="81"/>
        <end position="103"/>
    </location>
</feature>
<feature type="transmembrane region" description="Helical; Name=3" evidence="3">
    <location>
        <begin position="104"/>
        <end position="124"/>
    </location>
</feature>
<feature type="topological domain" description="Cytoplasmic" evidence="3">
    <location>
        <begin position="125"/>
        <end position="137"/>
    </location>
</feature>
<feature type="transmembrane region" description="Helical; Name=4" evidence="3">
    <location>
        <begin position="138"/>
        <end position="158"/>
    </location>
</feature>
<feature type="topological domain" description="Extracellular" evidence="3">
    <location>
        <begin position="159"/>
        <end position="185"/>
    </location>
</feature>
<feature type="transmembrane region" description="Helical; Name=5" evidence="3">
    <location>
        <begin position="186"/>
        <end position="206"/>
    </location>
</feature>
<feature type="topological domain" description="Cytoplasmic" evidence="3">
    <location>
        <begin position="207"/>
        <end position="230"/>
    </location>
</feature>
<feature type="transmembrane region" description="Helical; Name=6" evidence="3">
    <location>
        <begin position="231"/>
        <end position="251"/>
    </location>
</feature>
<feature type="topological domain" description="Extracellular" evidence="3">
    <location>
        <begin position="252"/>
        <end position="281"/>
    </location>
</feature>
<feature type="transmembrane region" description="Helical; Name=7" evidence="3">
    <location>
        <begin position="282"/>
        <end position="302"/>
    </location>
</feature>
<feature type="topological domain" description="Cytoplasmic" evidence="3">
    <location>
        <begin position="303"/>
        <end position="334"/>
    </location>
</feature>
<feature type="glycosylation site" description="N-linked (GlcNAc...) asparagine" evidence="3">
    <location>
        <position position="8"/>
    </location>
</feature>
<feature type="glycosylation site" description="N-linked (GlcNAc...) asparagine" evidence="3">
    <location>
        <position position="168"/>
    </location>
</feature>
<feature type="disulfide bond" evidence="4">
    <location>
        <begin position="95"/>
        <end position="172"/>
    </location>
</feature>
<feature type="mutagenesis site" description="Abolishes activation by succinate." evidence="6">
    <original>R</original>
    <variation>A</variation>
    <location>
        <position position="99"/>
    </location>
</feature>
<feature type="mutagenesis site" description="Abolishes activation by succinate." evidence="6">
    <original>H</original>
    <variation>A</variation>
    <location>
        <position position="103"/>
    </location>
</feature>
<feature type="mutagenesis site" description="No effect on receptor function." evidence="6">
    <original>Y</original>
    <variation>F</variation>
    <location>
        <position position="107"/>
    </location>
</feature>
<feature type="mutagenesis site" description="No effect on receptor function." evidence="6">
    <original>H</original>
    <variation>A</variation>
    <location>
        <position position="249"/>
    </location>
</feature>
<feature type="mutagenesis site" description="Abolishes activation by succinate." evidence="6">
    <original>R</original>
    <variation>A</variation>
    <location>
        <position position="252"/>
    </location>
</feature>
<feature type="mutagenesis site" description="No effect on receptor function." evidence="6">
    <original>R</original>
    <variation>A</variation>
    <location>
        <position position="255"/>
    </location>
</feature>
<feature type="mutagenesis site" description="Abolishes activation by succinate." evidence="6">
    <original>R</original>
    <variation>A</variation>
    <location>
        <position position="281"/>
    </location>
</feature>
<feature type="helix" evidence="15">
    <location>
        <begin position="12"/>
        <end position="48"/>
    </location>
</feature>
<feature type="strand" evidence="13">
    <location>
        <begin position="49"/>
        <end position="51"/>
    </location>
</feature>
<feature type="helix" evidence="15">
    <location>
        <begin position="57"/>
        <end position="73"/>
    </location>
</feature>
<feature type="helix" evidence="15">
    <location>
        <begin position="76"/>
        <end position="85"/>
    </location>
</feature>
<feature type="helix" evidence="15">
    <location>
        <begin position="92"/>
        <end position="125"/>
    </location>
</feature>
<feature type="helix" evidence="15">
    <location>
        <begin position="132"/>
        <end position="134"/>
    </location>
</feature>
<feature type="helix" evidence="15">
    <location>
        <begin position="136"/>
        <end position="154"/>
    </location>
</feature>
<feature type="helix" evidence="15">
    <location>
        <begin position="155"/>
        <end position="157"/>
    </location>
</feature>
<feature type="turn" evidence="15">
    <location>
        <begin position="158"/>
        <end position="160"/>
    </location>
</feature>
<feature type="strand" evidence="13">
    <location>
        <begin position="164"/>
        <end position="166"/>
    </location>
</feature>
<feature type="strand" evidence="13">
    <location>
        <begin position="169"/>
        <end position="171"/>
    </location>
</feature>
<feature type="turn" evidence="14">
    <location>
        <begin position="175"/>
        <end position="177"/>
    </location>
</feature>
<feature type="helix" evidence="15">
    <location>
        <begin position="181"/>
        <end position="195"/>
    </location>
</feature>
<feature type="helix" evidence="15">
    <location>
        <begin position="197"/>
        <end position="216"/>
    </location>
</feature>
<feature type="strand" evidence="13">
    <location>
        <begin position="222"/>
        <end position="224"/>
    </location>
</feature>
<feature type="helix" evidence="15">
    <location>
        <begin position="228"/>
        <end position="258"/>
    </location>
</feature>
<feature type="strand" evidence="12">
    <location>
        <begin position="261"/>
        <end position="263"/>
    </location>
</feature>
<feature type="helix" evidence="15">
    <location>
        <begin position="270"/>
        <end position="285"/>
    </location>
</feature>
<feature type="helix" evidence="15">
    <location>
        <begin position="287"/>
        <end position="296"/>
    </location>
</feature>
<feature type="helix" evidence="15">
    <location>
        <begin position="300"/>
        <end position="308"/>
    </location>
</feature>
<feature type="turn" evidence="13">
    <location>
        <begin position="312"/>
        <end position="316"/>
    </location>
</feature>
<proteinExistence type="evidence at protein level"/>
<reference key="1">
    <citation type="journal article" date="2001" name="J. Mol. Biol.">
        <title>An expressed sequence tag (EST) data mining strategy succeeding in the discovery of new G-protein coupled receptors.</title>
        <authorList>
            <person name="Wittenberger T."/>
            <person name="Schaller H.C."/>
            <person name="Hellebrand S."/>
        </authorList>
    </citation>
    <scope>NUCLEOTIDE SEQUENCE [MRNA]</scope>
    <scope>TISSUE SPECIFICITY</scope>
</reference>
<reference key="2">
    <citation type="submission" date="2000-03" db="EMBL/GenBank/DDBJ databases">
        <title>Human P2Y purinoceptor 1.</title>
        <authorList>
            <person name="Zhang W."/>
            <person name="Li N."/>
            <person name="Wan T."/>
            <person name="Cao X."/>
        </authorList>
    </citation>
    <scope>NUCLEOTIDE SEQUENCE [MRNA]</scope>
</reference>
<reference key="3">
    <citation type="submission" date="2007-12" db="EMBL/GenBank/DDBJ databases">
        <authorList>
            <person name="Kaighin V.A."/>
            <person name="Martin A.L."/>
            <person name="Aronstam R.S."/>
        </authorList>
    </citation>
    <scope>NUCLEOTIDE SEQUENCE [MRNA]</scope>
    <source>
        <tissue>Kidney</tissue>
    </source>
</reference>
<reference key="4">
    <citation type="journal article" date="2004" name="Nat. Genet.">
        <title>Complete sequencing and characterization of 21,243 full-length human cDNAs.</title>
        <authorList>
            <person name="Ota T."/>
            <person name="Suzuki Y."/>
            <person name="Nishikawa T."/>
            <person name="Otsuki T."/>
            <person name="Sugiyama T."/>
            <person name="Irie R."/>
            <person name="Wakamatsu A."/>
            <person name="Hayashi K."/>
            <person name="Sato H."/>
            <person name="Nagai K."/>
            <person name="Kimura K."/>
            <person name="Makita H."/>
            <person name="Sekine M."/>
            <person name="Obayashi M."/>
            <person name="Nishi T."/>
            <person name="Shibahara T."/>
            <person name="Tanaka T."/>
            <person name="Ishii S."/>
            <person name="Yamamoto J."/>
            <person name="Saito K."/>
            <person name="Kawai Y."/>
            <person name="Isono Y."/>
            <person name="Nakamura Y."/>
            <person name="Nagahari K."/>
            <person name="Murakami K."/>
            <person name="Yasuda T."/>
            <person name="Iwayanagi T."/>
            <person name="Wagatsuma M."/>
            <person name="Shiratori A."/>
            <person name="Sudo H."/>
            <person name="Hosoiri T."/>
            <person name="Kaku Y."/>
            <person name="Kodaira H."/>
            <person name="Kondo H."/>
            <person name="Sugawara M."/>
            <person name="Takahashi M."/>
            <person name="Kanda K."/>
            <person name="Yokoi T."/>
            <person name="Furuya T."/>
            <person name="Kikkawa E."/>
            <person name="Omura Y."/>
            <person name="Abe K."/>
            <person name="Kamihara K."/>
            <person name="Katsuta N."/>
            <person name="Sato K."/>
            <person name="Tanikawa M."/>
            <person name="Yamazaki M."/>
            <person name="Ninomiya K."/>
            <person name="Ishibashi T."/>
            <person name="Yamashita H."/>
            <person name="Murakawa K."/>
            <person name="Fujimori K."/>
            <person name="Tanai H."/>
            <person name="Kimata M."/>
            <person name="Watanabe M."/>
            <person name="Hiraoka S."/>
            <person name="Chiba Y."/>
            <person name="Ishida S."/>
            <person name="Ono Y."/>
            <person name="Takiguchi S."/>
            <person name="Watanabe S."/>
            <person name="Yosida M."/>
            <person name="Hotuta T."/>
            <person name="Kusano J."/>
            <person name="Kanehori K."/>
            <person name="Takahashi-Fujii A."/>
            <person name="Hara H."/>
            <person name="Tanase T.-O."/>
            <person name="Nomura Y."/>
            <person name="Togiya S."/>
            <person name="Komai F."/>
            <person name="Hara R."/>
            <person name="Takeuchi K."/>
            <person name="Arita M."/>
            <person name="Imose N."/>
            <person name="Musashino K."/>
            <person name="Yuuki H."/>
            <person name="Oshima A."/>
            <person name="Sasaki N."/>
            <person name="Aotsuka S."/>
            <person name="Yoshikawa Y."/>
            <person name="Matsunawa H."/>
            <person name="Ichihara T."/>
            <person name="Shiohata N."/>
            <person name="Sano S."/>
            <person name="Moriya S."/>
            <person name="Momiyama H."/>
            <person name="Satoh N."/>
            <person name="Takami S."/>
            <person name="Terashima Y."/>
            <person name="Suzuki O."/>
            <person name="Nakagawa S."/>
            <person name="Senoh A."/>
            <person name="Mizoguchi H."/>
            <person name="Goto Y."/>
            <person name="Shimizu F."/>
            <person name="Wakebe H."/>
            <person name="Hishigaki H."/>
            <person name="Watanabe T."/>
            <person name="Sugiyama A."/>
            <person name="Takemoto M."/>
            <person name="Kawakami B."/>
            <person name="Yamazaki M."/>
            <person name="Watanabe K."/>
            <person name="Kumagai A."/>
            <person name="Itakura S."/>
            <person name="Fukuzumi Y."/>
            <person name="Fujimori Y."/>
            <person name="Komiyama M."/>
            <person name="Tashiro H."/>
            <person name="Tanigami A."/>
            <person name="Fujiwara T."/>
            <person name="Ono T."/>
            <person name="Yamada K."/>
            <person name="Fujii Y."/>
            <person name="Ozaki K."/>
            <person name="Hirao M."/>
            <person name="Ohmori Y."/>
            <person name="Kawabata A."/>
            <person name="Hikiji T."/>
            <person name="Kobatake N."/>
            <person name="Inagaki H."/>
            <person name="Ikema Y."/>
            <person name="Okamoto S."/>
            <person name="Okitani R."/>
            <person name="Kawakami T."/>
            <person name="Noguchi S."/>
            <person name="Itoh T."/>
            <person name="Shigeta K."/>
            <person name="Senba T."/>
            <person name="Matsumura K."/>
            <person name="Nakajima Y."/>
            <person name="Mizuno T."/>
            <person name="Morinaga M."/>
            <person name="Sasaki M."/>
            <person name="Togashi T."/>
            <person name="Oyama M."/>
            <person name="Hata H."/>
            <person name="Watanabe M."/>
            <person name="Komatsu T."/>
            <person name="Mizushima-Sugano J."/>
            <person name="Satoh T."/>
            <person name="Shirai Y."/>
            <person name="Takahashi Y."/>
            <person name="Nakagawa K."/>
            <person name="Okumura K."/>
            <person name="Nagase T."/>
            <person name="Nomura N."/>
            <person name="Kikuchi H."/>
            <person name="Masuho Y."/>
            <person name="Yamashita R."/>
            <person name="Nakai K."/>
            <person name="Yada T."/>
            <person name="Nakamura Y."/>
            <person name="Ohara O."/>
            <person name="Isogai T."/>
            <person name="Sugano S."/>
        </authorList>
    </citation>
    <scope>NUCLEOTIDE SEQUENCE [LARGE SCALE MRNA]</scope>
    <source>
        <tissue>Umbilical cord blood</tissue>
    </source>
</reference>
<reference key="5">
    <citation type="journal article" date="2006" name="Nature">
        <title>The DNA sequence, annotation and analysis of human chromosome 3.</title>
        <authorList>
            <person name="Muzny D.M."/>
            <person name="Scherer S.E."/>
            <person name="Kaul R."/>
            <person name="Wang J."/>
            <person name="Yu J."/>
            <person name="Sudbrak R."/>
            <person name="Buhay C.J."/>
            <person name="Chen R."/>
            <person name="Cree A."/>
            <person name="Ding Y."/>
            <person name="Dugan-Rocha S."/>
            <person name="Gill R."/>
            <person name="Gunaratne P."/>
            <person name="Harris R.A."/>
            <person name="Hawes A.C."/>
            <person name="Hernandez J."/>
            <person name="Hodgson A.V."/>
            <person name="Hume J."/>
            <person name="Jackson A."/>
            <person name="Khan Z.M."/>
            <person name="Kovar-Smith C."/>
            <person name="Lewis L.R."/>
            <person name="Lozado R.J."/>
            <person name="Metzker M.L."/>
            <person name="Milosavljevic A."/>
            <person name="Miner G.R."/>
            <person name="Morgan M.B."/>
            <person name="Nazareth L.V."/>
            <person name="Scott G."/>
            <person name="Sodergren E."/>
            <person name="Song X.-Z."/>
            <person name="Steffen D."/>
            <person name="Wei S."/>
            <person name="Wheeler D.A."/>
            <person name="Wright M.W."/>
            <person name="Worley K.C."/>
            <person name="Yuan Y."/>
            <person name="Zhang Z."/>
            <person name="Adams C.Q."/>
            <person name="Ansari-Lari M.A."/>
            <person name="Ayele M."/>
            <person name="Brown M.J."/>
            <person name="Chen G."/>
            <person name="Chen Z."/>
            <person name="Clendenning J."/>
            <person name="Clerc-Blankenburg K.P."/>
            <person name="Chen R."/>
            <person name="Chen Z."/>
            <person name="Davis C."/>
            <person name="Delgado O."/>
            <person name="Dinh H.H."/>
            <person name="Dong W."/>
            <person name="Draper H."/>
            <person name="Ernst S."/>
            <person name="Fu G."/>
            <person name="Gonzalez-Garay M.L."/>
            <person name="Garcia D.K."/>
            <person name="Gillett W."/>
            <person name="Gu J."/>
            <person name="Hao B."/>
            <person name="Haugen E."/>
            <person name="Havlak P."/>
            <person name="He X."/>
            <person name="Hennig S."/>
            <person name="Hu S."/>
            <person name="Huang W."/>
            <person name="Jackson L.R."/>
            <person name="Jacob L.S."/>
            <person name="Kelly S.H."/>
            <person name="Kube M."/>
            <person name="Levy R."/>
            <person name="Li Z."/>
            <person name="Liu B."/>
            <person name="Liu J."/>
            <person name="Liu W."/>
            <person name="Lu J."/>
            <person name="Maheshwari M."/>
            <person name="Nguyen B.-V."/>
            <person name="Okwuonu G.O."/>
            <person name="Palmeiri A."/>
            <person name="Pasternak S."/>
            <person name="Perez L.M."/>
            <person name="Phelps K.A."/>
            <person name="Plopper F.J."/>
            <person name="Qiang B."/>
            <person name="Raymond C."/>
            <person name="Rodriguez R."/>
            <person name="Saenphimmachak C."/>
            <person name="Santibanez J."/>
            <person name="Shen H."/>
            <person name="Shen Y."/>
            <person name="Subramanian S."/>
            <person name="Tabor P.E."/>
            <person name="Verduzco D."/>
            <person name="Waldron L."/>
            <person name="Wang J."/>
            <person name="Wang J."/>
            <person name="Wang Q."/>
            <person name="Williams G.A."/>
            <person name="Wong G.K.-S."/>
            <person name="Yao Z."/>
            <person name="Zhang J."/>
            <person name="Zhang X."/>
            <person name="Zhao G."/>
            <person name="Zhou J."/>
            <person name="Zhou Y."/>
            <person name="Nelson D."/>
            <person name="Lehrach H."/>
            <person name="Reinhardt R."/>
            <person name="Naylor S.L."/>
            <person name="Yang H."/>
            <person name="Olson M."/>
            <person name="Weinstock G."/>
            <person name="Gibbs R.A."/>
        </authorList>
    </citation>
    <scope>NUCLEOTIDE SEQUENCE [LARGE SCALE GENOMIC DNA]</scope>
</reference>
<reference key="6">
    <citation type="submission" date="2005-09" db="EMBL/GenBank/DDBJ databases">
        <authorList>
            <person name="Mural R.J."/>
            <person name="Istrail S."/>
            <person name="Sutton G.G."/>
            <person name="Florea L."/>
            <person name="Halpern A.L."/>
            <person name="Mobarry C.M."/>
            <person name="Lippert R."/>
            <person name="Walenz B."/>
            <person name="Shatkay H."/>
            <person name="Dew I."/>
            <person name="Miller J.R."/>
            <person name="Flanigan M.J."/>
            <person name="Edwards N.J."/>
            <person name="Bolanos R."/>
            <person name="Fasulo D."/>
            <person name="Halldorsson B.V."/>
            <person name="Hannenhalli S."/>
            <person name="Turner R."/>
            <person name="Yooseph S."/>
            <person name="Lu F."/>
            <person name="Nusskern D.R."/>
            <person name="Shue B.C."/>
            <person name="Zheng X.H."/>
            <person name="Zhong F."/>
            <person name="Delcher A.L."/>
            <person name="Huson D.H."/>
            <person name="Kravitz S.A."/>
            <person name="Mouchard L."/>
            <person name="Reinert K."/>
            <person name="Remington K.A."/>
            <person name="Clark A.G."/>
            <person name="Waterman M.S."/>
            <person name="Eichler E.E."/>
            <person name="Adams M.D."/>
            <person name="Hunkapiller M.W."/>
            <person name="Myers E.W."/>
            <person name="Venter J.C."/>
        </authorList>
    </citation>
    <scope>NUCLEOTIDE SEQUENCE [LARGE SCALE GENOMIC DNA]</scope>
</reference>
<reference key="7">
    <citation type="journal article" date="2004" name="Genome Res.">
        <title>The status, quality, and expansion of the NIH full-length cDNA project: the Mammalian Gene Collection (MGC).</title>
        <authorList>
            <consortium name="The MGC Project Team"/>
        </authorList>
    </citation>
    <scope>NUCLEOTIDE SEQUENCE [LARGE SCALE MRNA]</scope>
    <source>
        <tissue>Kidney</tissue>
    </source>
</reference>
<reference key="8">
    <citation type="journal article" date="2004" name="Nature">
        <title>Citric acid cycle intermediates as ligands for orphan G-protein-coupled receptors.</title>
        <authorList>
            <person name="He W."/>
            <person name="Miao F.J.-P."/>
            <person name="Lin D.C.-H."/>
            <person name="Schwandner R.T."/>
            <person name="Wang Z."/>
            <person name="Gao J."/>
            <person name="Chen J.-L."/>
            <person name="Tian H."/>
            <person name="Ling L."/>
        </authorList>
    </citation>
    <scope>FUNCTION</scope>
    <scope>MUTAGENESIS OF ARG-99; HIS-103; TYR-107; HIS-249; ARG-252; ARG-255 AND ARG-281</scope>
    <scope>SUBCELLULAR LOCATION</scope>
</reference>
<reference key="9">
    <citation type="journal article" date="2008" name="Nat. Immunol.">
        <title>Triggering the succinate receptor GPR91 on dendritic cells enhances immunity.</title>
        <authorList>
            <person name="Rubic T."/>
            <person name="Lametschwandtner G."/>
            <person name="Jost S."/>
            <person name="Hinteregger S."/>
            <person name="Kund J."/>
            <person name="Carballido-Perrig N."/>
            <person name="Schwaerzler C."/>
            <person name="Junt T."/>
            <person name="Voshol H."/>
            <person name="Meingassner J.G."/>
            <person name="Mao X."/>
            <person name="Werner G."/>
            <person name="Rot A."/>
            <person name="Carballido J.M."/>
        </authorList>
    </citation>
    <scope>FUNCTION</scope>
    <scope>TISSUE SPECIFICITY</scope>
</reference>
<reference key="10">
    <citation type="journal article" date="2013" name="FEBS Lett.">
        <title>Succinate receptor GPR91, a Galpha(i) coupled receptor that increases intracellular calcium concentrations through PLCbeta.</title>
        <authorList>
            <person name="Sundstroem L."/>
            <person name="Greasley P.J."/>
            <person name="Engberg S."/>
            <person name="Wallander M."/>
            <person name="Ryberg E."/>
        </authorList>
    </citation>
    <scope>FUNCTION</scope>
</reference>
<reference key="11">
    <citation type="journal article" date="2021" name="Cell Rep.">
        <title>Extracellular succinate hyperpolarizes M2 macrophages through SUCNR1/GPR91-mediated Gq signaling.</title>
        <authorList>
            <person name="Trauelsen M."/>
            <person name="Hiron T.K."/>
            <person name="Lin D."/>
            <person name="Petersen J.E."/>
            <person name="Breton B."/>
            <person name="Husted A.S."/>
            <person name="Hjorth S.A."/>
            <person name="Inoue A."/>
            <person name="Frimurer T.M."/>
            <person name="Bouvier M."/>
            <person name="O'Callaghan C.A."/>
            <person name="Schwartz T.W."/>
        </authorList>
    </citation>
    <scope>FUNCTION IN MACROPHAGES</scope>
</reference>
<accession>Q9BXA5</accession>
<accession>A8K305</accession>
<accession>Q8TDQ8</accession>
<sequence>MLGIMAWNATCKNWLAAEAALEKYYLSIFYGIEFVVGVLGNTIVVYGYIFSLKNWNSSNIYLFNLSVSDLAFLCTLPMLIRSYANGNWIYGDVLCISNRYVLHANLYTSILFLTFISIDRYLIIKYPFREHLLQKKEFAILISLAIWVLVTLELLPILPLINPVITDNGTTCNDFASSGDPNYNLIYSMCLTLLGFLIPLFVMCFFYYKIALFLKQRNRQVATALPLEKPLNLVIMAVVIFSVLFTPYHVMRNVRIASRLGSWKQYQCTQVVINSFYIVTRPLAFLNSVINPVFYFLLGDHFRDMLMNQLRHNFKSLTSFSRWAHELLLSFREK</sequence>
<dbReference type="EMBL" id="AF348078">
    <property type="protein sequence ID" value="AAK29080.1"/>
    <property type="status" value="ALT_INIT"/>
    <property type="molecule type" value="mRNA"/>
</dbReference>
<dbReference type="EMBL" id="AF247785">
    <property type="protein sequence ID" value="AAL95690.1"/>
    <property type="molecule type" value="mRNA"/>
</dbReference>
<dbReference type="EMBL" id="EU432110">
    <property type="protein sequence ID" value="ABY87909.1"/>
    <property type="molecule type" value="mRNA"/>
</dbReference>
<dbReference type="EMBL" id="AK290420">
    <property type="protein sequence ID" value="BAF83109.1"/>
    <property type="molecule type" value="mRNA"/>
</dbReference>
<dbReference type="EMBL" id="AC068647">
    <property type="status" value="NOT_ANNOTATED_CDS"/>
    <property type="molecule type" value="Genomic_DNA"/>
</dbReference>
<dbReference type="EMBL" id="CH471052">
    <property type="protein sequence ID" value="EAW78789.1"/>
    <property type="molecule type" value="Genomic_DNA"/>
</dbReference>
<dbReference type="EMBL" id="BC030948">
    <property type="protein sequence ID" value="AAH30948.3"/>
    <property type="molecule type" value="mRNA"/>
</dbReference>
<dbReference type="CCDS" id="CCDS3162.1"/>
<dbReference type="RefSeq" id="NP_149039.2">
    <property type="nucleotide sequence ID" value="NM_033050.5"/>
</dbReference>
<dbReference type="PDB" id="8JPN">
    <property type="method" value="EM"/>
    <property type="resolution" value="2.90 A"/>
    <property type="chains" value="R=1-334"/>
</dbReference>
<dbReference type="PDB" id="8JPP">
    <property type="method" value="EM"/>
    <property type="resolution" value="3.20 A"/>
    <property type="chains" value="R=1-334"/>
</dbReference>
<dbReference type="PDB" id="8WOG">
    <property type="method" value="EM"/>
    <property type="resolution" value="2.97 A"/>
    <property type="chains" value="A=8-318"/>
</dbReference>
<dbReference type="PDB" id="8WP1">
    <property type="method" value="EM"/>
    <property type="resolution" value="3.15 A"/>
    <property type="chains" value="A=9-312"/>
</dbReference>
<dbReference type="PDB" id="8YKV">
    <property type="method" value="EM"/>
    <property type="resolution" value="2.48 A"/>
    <property type="chains" value="R=1-334"/>
</dbReference>
<dbReference type="PDB" id="8YKW">
    <property type="method" value="EM"/>
    <property type="resolution" value="2.75 A"/>
    <property type="chains" value="R=1-334"/>
</dbReference>
<dbReference type="PDB" id="8YKX">
    <property type="method" value="EM"/>
    <property type="resolution" value="2.69 A"/>
    <property type="chains" value="R=1-334"/>
</dbReference>
<dbReference type="PDBsum" id="8JPN"/>
<dbReference type="PDBsum" id="8JPP"/>
<dbReference type="PDBsum" id="8WOG"/>
<dbReference type="PDBsum" id="8WP1"/>
<dbReference type="PDBsum" id="8YKV"/>
<dbReference type="PDBsum" id="8YKW"/>
<dbReference type="PDBsum" id="8YKX"/>
<dbReference type="EMDB" id="EMD-36486"/>
<dbReference type="EMDB" id="EMD-37686"/>
<dbReference type="EMDB" id="EMD-37707"/>
<dbReference type="EMDB" id="EMD-39373"/>
<dbReference type="EMDB" id="EMD-39374"/>
<dbReference type="EMDB" id="EMD-39375"/>
<dbReference type="SMR" id="Q9BXA5"/>
<dbReference type="BioGRID" id="121179">
    <property type="interactions" value="5"/>
</dbReference>
<dbReference type="FunCoup" id="Q9BXA5">
    <property type="interactions" value="620"/>
</dbReference>
<dbReference type="IntAct" id="Q9BXA5">
    <property type="interactions" value="4"/>
</dbReference>
<dbReference type="STRING" id="9606.ENSP00000355156"/>
<dbReference type="BindingDB" id="Q9BXA5"/>
<dbReference type="ChEMBL" id="CHEMBL2150838"/>
<dbReference type="DrugBank" id="DB00139">
    <property type="generic name" value="Succinic acid"/>
</dbReference>
<dbReference type="DrugCentral" id="Q9BXA5"/>
<dbReference type="GuidetoPHARMACOLOGY" id="166"/>
<dbReference type="GlyCosmos" id="Q9BXA5">
    <property type="glycosylation" value="2 sites, No reported glycans"/>
</dbReference>
<dbReference type="GlyGen" id="Q9BXA5">
    <property type="glycosylation" value="2 sites, 1 N-linked glycan (1 site)"/>
</dbReference>
<dbReference type="iPTMnet" id="Q9BXA5"/>
<dbReference type="PhosphoSitePlus" id="Q9BXA5"/>
<dbReference type="BioMuta" id="SUCNR1"/>
<dbReference type="DMDM" id="259016146"/>
<dbReference type="MassIVE" id="Q9BXA5"/>
<dbReference type="PaxDb" id="9606-ENSP00000355156"/>
<dbReference type="PeptideAtlas" id="Q9BXA5"/>
<dbReference type="ABCD" id="Q9BXA5">
    <property type="antibodies" value="1 sequenced antibody"/>
</dbReference>
<dbReference type="Antibodypedia" id="18315">
    <property type="antibodies" value="258 antibodies from 29 providers"/>
</dbReference>
<dbReference type="DNASU" id="56670"/>
<dbReference type="Ensembl" id="ENST00000362032.6">
    <property type="protein sequence ID" value="ENSP00000355156.4"/>
    <property type="gene ID" value="ENSG00000198829.6"/>
</dbReference>
<dbReference type="GeneID" id="56670"/>
<dbReference type="KEGG" id="hsa:56670"/>
<dbReference type="MANE-Select" id="ENST00000362032.6">
    <property type="protein sequence ID" value="ENSP00000355156.4"/>
    <property type="RefSeq nucleotide sequence ID" value="NM_033050.6"/>
    <property type="RefSeq protein sequence ID" value="NP_149039.2"/>
</dbReference>
<dbReference type="UCSC" id="uc003ezf.3">
    <property type="organism name" value="human"/>
</dbReference>
<dbReference type="AGR" id="HGNC:4542"/>
<dbReference type="CTD" id="56670"/>
<dbReference type="DisGeNET" id="56670"/>
<dbReference type="GeneCards" id="SUCNR1"/>
<dbReference type="HGNC" id="HGNC:4542">
    <property type="gene designation" value="SUCNR1"/>
</dbReference>
<dbReference type="HPA" id="ENSG00000198829">
    <property type="expression patterns" value="Tissue enriched (kidney)"/>
</dbReference>
<dbReference type="MIM" id="606381">
    <property type="type" value="gene"/>
</dbReference>
<dbReference type="neXtProt" id="NX_Q9BXA5"/>
<dbReference type="OpenTargets" id="ENSG00000198829"/>
<dbReference type="PharmGKB" id="PA28934"/>
<dbReference type="VEuPathDB" id="HostDB:ENSG00000198829"/>
<dbReference type="eggNOG" id="ENOG502QVWP">
    <property type="taxonomic scope" value="Eukaryota"/>
</dbReference>
<dbReference type="GeneTree" id="ENSGT01030000234621"/>
<dbReference type="HOGENOM" id="CLU_009579_8_2_1"/>
<dbReference type="InParanoid" id="Q9BXA5"/>
<dbReference type="OMA" id="YYKIALF"/>
<dbReference type="OrthoDB" id="9927220at2759"/>
<dbReference type="PAN-GO" id="Q9BXA5">
    <property type="GO annotations" value="3 GO annotations based on evolutionary models"/>
</dbReference>
<dbReference type="PhylomeDB" id="Q9BXA5"/>
<dbReference type="TreeFam" id="TF350009"/>
<dbReference type="PathwayCommons" id="Q9BXA5"/>
<dbReference type="Reactome" id="R-HSA-373076">
    <property type="pathway name" value="Class A/1 (Rhodopsin-like receptors)"/>
</dbReference>
<dbReference type="Reactome" id="R-HSA-418594">
    <property type="pathway name" value="G alpha (i) signalling events"/>
</dbReference>
<dbReference type="SignaLink" id="Q9BXA5"/>
<dbReference type="BioGRID-ORCS" id="56670">
    <property type="hits" value="18 hits in 1149 CRISPR screens"/>
</dbReference>
<dbReference type="ChiTaRS" id="SUCNR1">
    <property type="organism name" value="human"/>
</dbReference>
<dbReference type="GeneWiki" id="SUCNR1"/>
<dbReference type="GenomeRNAi" id="56670"/>
<dbReference type="Pharos" id="Q9BXA5">
    <property type="development level" value="Tchem"/>
</dbReference>
<dbReference type="PRO" id="PR:Q9BXA5"/>
<dbReference type="Proteomes" id="UP000005640">
    <property type="component" value="Chromosome 3"/>
</dbReference>
<dbReference type="RNAct" id="Q9BXA5">
    <property type="molecule type" value="protein"/>
</dbReference>
<dbReference type="Bgee" id="ENSG00000198829">
    <property type="expression patterns" value="Expressed in kidney epithelium and 100 other cell types or tissues"/>
</dbReference>
<dbReference type="GO" id="GO:0070062">
    <property type="term" value="C:extracellular exosome"/>
    <property type="evidence" value="ECO:0007005"/>
    <property type="project" value="UniProtKB"/>
</dbReference>
<dbReference type="GO" id="GO:0005886">
    <property type="term" value="C:plasma membrane"/>
    <property type="evidence" value="ECO:0000314"/>
    <property type="project" value="UniProtKB"/>
</dbReference>
<dbReference type="GO" id="GO:0004930">
    <property type="term" value="F:G protein-coupled receptor activity"/>
    <property type="evidence" value="ECO:0000314"/>
    <property type="project" value="UniProtKB"/>
</dbReference>
<dbReference type="GO" id="GO:0038023">
    <property type="term" value="F:signaling receptor activity"/>
    <property type="evidence" value="ECO:0000318"/>
    <property type="project" value="GO_Central"/>
</dbReference>
<dbReference type="GO" id="GO:0097009">
    <property type="term" value="P:energy homeostasis"/>
    <property type="evidence" value="ECO:0000250"/>
    <property type="project" value="UniProt"/>
</dbReference>
<dbReference type="GO" id="GO:0007186">
    <property type="term" value="P:G protein-coupled receptor signaling pathway"/>
    <property type="evidence" value="ECO:0000314"/>
    <property type="project" value="UniProtKB"/>
</dbReference>
<dbReference type="GO" id="GO:0042593">
    <property type="term" value="P:glucose homeostasis"/>
    <property type="evidence" value="ECO:0007669"/>
    <property type="project" value="Ensembl"/>
</dbReference>
<dbReference type="GO" id="GO:0002281">
    <property type="term" value="P:macrophage activation involved in immune response"/>
    <property type="evidence" value="ECO:0007669"/>
    <property type="project" value="Ensembl"/>
</dbReference>
<dbReference type="GO" id="GO:0050921">
    <property type="term" value="P:positive regulation of chemotaxis"/>
    <property type="evidence" value="ECO:0007669"/>
    <property type="project" value="Ensembl"/>
</dbReference>
<dbReference type="GO" id="GO:0050729">
    <property type="term" value="P:positive regulation of inflammatory response"/>
    <property type="evidence" value="ECO:0007669"/>
    <property type="project" value="Ensembl"/>
</dbReference>
<dbReference type="GO" id="GO:0060177">
    <property type="term" value="P:regulation of angiotensin metabolic process"/>
    <property type="evidence" value="ECO:0007669"/>
    <property type="project" value="Ensembl"/>
</dbReference>
<dbReference type="GO" id="GO:0002001">
    <property type="term" value="P:renin secretion into blood stream"/>
    <property type="evidence" value="ECO:0007669"/>
    <property type="project" value="Ensembl"/>
</dbReference>
<dbReference type="GO" id="GO:0051592">
    <property type="term" value="P:response to calcium ion"/>
    <property type="evidence" value="ECO:0007669"/>
    <property type="project" value="Ensembl"/>
</dbReference>
<dbReference type="CDD" id="cd15378">
    <property type="entry name" value="7tmA_SUCNR1_GPR91"/>
    <property type="match status" value="1"/>
</dbReference>
<dbReference type="FunFam" id="1.20.1070.10:FF:000285">
    <property type="entry name" value="Succinate receptor 1"/>
    <property type="match status" value="1"/>
</dbReference>
<dbReference type="Gene3D" id="1.20.1070.10">
    <property type="entry name" value="Rhodopsin 7-helix transmembrane proteins"/>
    <property type="match status" value="1"/>
</dbReference>
<dbReference type="InterPro" id="IPR000276">
    <property type="entry name" value="GPCR_Rhodpsn"/>
</dbReference>
<dbReference type="InterPro" id="IPR017452">
    <property type="entry name" value="GPCR_Rhodpsn_7TM"/>
</dbReference>
<dbReference type="PANTHER" id="PTHR24231">
    <property type="entry name" value="PURINOCEPTOR-RELATED G-PROTEIN COUPLED RECEPTOR"/>
    <property type="match status" value="1"/>
</dbReference>
<dbReference type="PANTHER" id="PTHR24231:SF14">
    <property type="entry name" value="SUCCINATE RECEPTOR 1"/>
    <property type="match status" value="1"/>
</dbReference>
<dbReference type="Pfam" id="PF00001">
    <property type="entry name" value="7tm_1"/>
    <property type="match status" value="1"/>
</dbReference>
<dbReference type="PRINTS" id="PR00237">
    <property type="entry name" value="GPCRRHODOPSN"/>
</dbReference>
<dbReference type="PRINTS" id="PR01157">
    <property type="entry name" value="P2YPURNOCPTR"/>
</dbReference>
<dbReference type="SUPFAM" id="SSF81321">
    <property type="entry name" value="Family A G protein-coupled receptor-like"/>
    <property type="match status" value="1"/>
</dbReference>
<dbReference type="PROSITE" id="PS00237">
    <property type="entry name" value="G_PROTEIN_RECEP_F1_1"/>
    <property type="match status" value="1"/>
</dbReference>
<dbReference type="PROSITE" id="PS50262">
    <property type="entry name" value="G_PROTEIN_RECEP_F1_2"/>
    <property type="match status" value="1"/>
</dbReference>
<comment type="function">
    <text evidence="1 2 6 7 8 9">G protein-coupled receptor for succinate able to mediate signaling through Gq/GNAQ or Gi/GNAI second messengers depending on the cell type and the processes regulated (By similarity) (PubMed:15141213, PubMed:23770096, PubMed:34133934). Succinate-SUCNR1 signaling serves as a link between metabolic stress, inflammation and energy homeostasis (PubMed:18820681, PubMed:34133934). In macrophages, plays a range of immune-regulatory roles. During inflammation, succinate-SUCNR1 signaling may act as an anti-inflammatory mediator or boost inflammation depending on the inflammatory status of cells (By similarity). Hyperpolarizes M2 macrophages versus M1 phenotype through Gq signaling by regulating the transcription of genes involved in immune function (PubMed:34133934). In activated M1 macrophages, plays a pro-inflammatory role in response to LPS (By similarity). Expressed in dendritic cells, where it is involved in the sensing of immunological danger and enhances immunity. Mediates succinate triggered intracelleular calcium mobilization, induces migratory responses and acts in synergy with Toll-like receptor ligands for the production of proinflammatory cytokines as well as an enhancement of antigen-specific activation of helper T cells (PubMed:18820681). In the small intestine, mediates the activation of tuft cells by dietary succinate and triggers type 2 immunity (By similarity). In adipocytes, plays an important role in the control of energy metabolism. In response to succinate, controls leptin expression in an AMPK-JNK-CEBPA-dependent as well as circadian clock-regulated manner (By similarity). In muscle tissue, is expressed in non-muscle cells and coordinates muscle remodeling in response to the succinate produced during exercise training in a paracrine manner (By similarity). In retina, acts as a mediator of vessel growth during retinal development. In response to succinate, regulates the production of angiogenic factors, including VEGF, by retinal ganglion neurons (By similarity).</text>
</comment>
<comment type="interaction">
    <interactant intactId="EBI-17962797">
        <id>Q9BXA5</id>
    </interactant>
    <interactant intactId="EBI-21591415">
        <id>P13473-2</id>
        <label>LAMP2</label>
    </interactant>
    <organismsDiffer>false</organismsDiffer>
    <experiments>3</experiments>
</comment>
<comment type="interaction">
    <interactant intactId="EBI-17962797">
        <id>Q9BXA5</id>
    </interactant>
    <interactant intactId="EBI-2623095">
        <id>Q9Y371</id>
        <label>SH3GLB1</label>
    </interactant>
    <organismsDiffer>false</organismsDiffer>
    <experiments>3</experiments>
</comment>
<comment type="interaction">
    <interactant intactId="EBI-17962797">
        <id>Q9BXA5</id>
    </interactant>
    <interactant intactId="EBI-8638294">
        <id>Q9NUH8</id>
        <label>TMEM14B</label>
    </interactant>
    <organismsDiffer>false</organismsDiffer>
    <experiments>3</experiments>
</comment>
<comment type="subcellular location">
    <subcellularLocation>
        <location evidence="6">Cell membrane</location>
        <topology evidence="6">Multi-pass membrane protein</topology>
    </subcellularLocation>
</comment>
<comment type="tissue specificity">
    <text evidence="5 7">Expressed specifically in kidney (PubMed:11273702). Highly expressed in immature dendritic cells, expression rapidly downregulates after maturation. Also expressed in macrophages (PubMed:18820681).</text>
</comment>
<comment type="similarity">
    <text evidence="4">Belongs to the G-protein coupled receptor 1 family.</text>
</comment>
<comment type="caution">
    <text evidence="10">It is uncertain whether Met-1 or Met-5 is the initiator.</text>
</comment>
<comment type="sequence caution" evidence="10">
    <conflict type="erroneous initiation">
        <sequence resource="EMBL-CDS" id="AAK29080"/>
    </conflict>
    <text>Truncated N-terminus.</text>
</comment>
<gene>
    <name evidence="11" type="primary">SUCNR1</name>
    <name type="synonym">GPR91</name>
</gene>